<reference key="1">
    <citation type="journal article" date="2004" name="Proc. Natl. Acad. Sci. U.S.A.">
        <title>The complete genomic sequence of Nocardia farcinica IFM 10152.</title>
        <authorList>
            <person name="Ishikawa J."/>
            <person name="Yamashita A."/>
            <person name="Mikami Y."/>
            <person name="Hoshino Y."/>
            <person name="Kurita H."/>
            <person name="Hotta K."/>
            <person name="Shiba T."/>
            <person name="Hattori M."/>
        </authorList>
    </citation>
    <scope>NUCLEOTIDE SEQUENCE [LARGE SCALE GENOMIC DNA]</scope>
    <source>
        <strain>IFM 10152</strain>
    </source>
</reference>
<keyword id="KW-1003">Cell membrane</keyword>
<keyword id="KW-0342">GTP-binding</keyword>
<keyword id="KW-0378">Hydrolase</keyword>
<keyword id="KW-0472">Membrane</keyword>
<keyword id="KW-0547">Nucleotide-binding</keyword>
<keyword id="KW-0648">Protein biosynthesis</keyword>
<keyword id="KW-1185">Reference proteome</keyword>
<evidence type="ECO:0000255" key="1">
    <source>
        <dbReference type="HAMAP-Rule" id="MF_00071"/>
    </source>
</evidence>
<dbReference type="EC" id="3.6.5.n1" evidence="1"/>
<dbReference type="EMBL" id="AP006618">
    <property type="protein sequence ID" value="BAD56244.1"/>
    <property type="molecule type" value="Genomic_DNA"/>
</dbReference>
<dbReference type="RefSeq" id="WP_011207929.1">
    <property type="nucleotide sequence ID" value="NC_006361.1"/>
</dbReference>
<dbReference type="SMR" id="Q5YZZ7"/>
<dbReference type="STRING" id="247156.NFA_13990"/>
<dbReference type="GeneID" id="61132217"/>
<dbReference type="KEGG" id="nfa:NFA_13990"/>
<dbReference type="eggNOG" id="COG0481">
    <property type="taxonomic scope" value="Bacteria"/>
</dbReference>
<dbReference type="HOGENOM" id="CLU_009995_3_3_11"/>
<dbReference type="OrthoDB" id="9801472at2"/>
<dbReference type="Proteomes" id="UP000006820">
    <property type="component" value="Chromosome"/>
</dbReference>
<dbReference type="GO" id="GO:0005886">
    <property type="term" value="C:plasma membrane"/>
    <property type="evidence" value="ECO:0007669"/>
    <property type="project" value="UniProtKB-SubCell"/>
</dbReference>
<dbReference type="GO" id="GO:0005525">
    <property type="term" value="F:GTP binding"/>
    <property type="evidence" value="ECO:0007669"/>
    <property type="project" value="UniProtKB-UniRule"/>
</dbReference>
<dbReference type="GO" id="GO:0003924">
    <property type="term" value="F:GTPase activity"/>
    <property type="evidence" value="ECO:0007669"/>
    <property type="project" value="UniProtKB-UniRule"/>
</dbReference>
<dbReference type="GO" id="GO:0043022">
    <property type="term" value="F:ribosome binding"/>
    <property type="evidence" value="ECO:0007669"/>
    <property type="project" value="UniProtKB-UniRule"/>
</dbReference>
<dbReference type="GO" id="GO:0003746">
    <property type="term" value="F:translation elongation factor activity"/>
    <property type="evidence" value="ECO:0007669"/>
    <property type="project" value="UniProtKB-UniRule"/>
</dbReference>
<dbReference type="GO" id="GO:0045727">
    <property type="term" value="P:positive regulation of translation"/>
    <property type="evidence" value="ECO:0007669"/>
    <property type="project" value="UniProtKB-UniRule"/>
</dbReference>
<dbReference type="CDD" id="cd03699">
    <property type="entry name" value="EF4_II"/>
    <property type="match status" value="1"/>
</dbReference>
<dbReference type="CDD" id="cd16260">
    <property type="entry name" value="EF4_III"/>
    <property type="match status" value="1"/>
</dbReference>
<dbReference type="CDD" id="cd01890">
    <property type="entry name" value="LepA"/>
    <property type="match status" value="1"/>
</dbReference>
<dbReference type="CDD" id="cd03709">
    <property type="entry name" value="lepA_C"/>
    <property type="match status" value="1"/>
</dbReference>
<dbReference type="FunFam" id="3.30.70.240:FF:000011">
    <property type="entry name" value="Elongation factor 4"/>
    <property type="match status" value="1"/>
</dbReference>
<dbReference type="FunFam" id="3.40.50.300:FF:000078">
    <property type="entry name" value="Elongation factor 4"/>
    <property type="match status" value="1"/>
</dbReference>
<dbReference type="FunFam" id="2.40.30.10:FF:000015">
    <property type="entry name" value="Translation factor GUF1, mitochondrial"/>
    <property type="match status" value="1"/>
</dbReference>
<dbReference type="FunFam" id="3.30.70.2570:FF:000001">
    <property type="entry name" value="Translation factor GUF1, mitochondrial"/>
    <property type="match status" value="1"/>
</dbReference>
<dbReference type="FunFam" id="3.30.70.870:FF:000004">
    <property type="entry name" value="Translation factor GUF1, mitochondrial"/>
    <property type="match status" value="1"/>
</dbReference>
<dbReference type="Gene3D" id="3.30.70.240">
    <property type="match status" value="1"/>
</dbReference>
<dbReference type="Gene3D" id="3.30.70.2570">
    <property type="entry name" value="Elongation factor 4, C-terminal domain"/>
    <property type="match status" value="1"/>
</dbReference>
<dbReference type="Gene3D" id="3.30.70.870">
    <property type="entry name" value="Elongation Factor G (Translational Gtpase), domain 3"/>
    <property type="match status" value="1"/>
</dbReference>
<dbReference type="Gene3D" id="3.40.50.300">
    <property type="entry name" value="P-loop containing nucleotide triphosphate hydrolases"/>
    <property type="match status" value="1"/>
</dbReference>
<dbReference type="Gene3D" id="2.40.30.10">
    <property type="entry name" value="Translation factors"/>
    <property type="match status" value="1"/>
</dbReference>
<dbReference type="HAMAP" id="MF_00071">
    <property type="entry name" value="LepA"/>
    <property type="match status" value="1"/>
</dbReference>
<dbReference type="InterPro" id="IPR006297">
    <property type="entry name" value="EF-4"/>
</dbReference>
<dbReference type="InterPro" id="IPR035647">
    <property type="entry name" value="EFG_III/V"/>
</dbReference>
<dbReference type="InterPro" id="IPR000640">
    <property type="entry name" value="EFG_V-like"/>
</dbReference>
<dbReference type="InterPro" id="IPR004161">
    <property type="entry name" value="EFTu-like_2"/>
</dbReference>
<dbReference type="InterPro" id="IPR031157">
    <property type="entry name" value="G_TR_CS"/>
</dbReference>
<dbReference type="InterPro" id="IPR038363">
    <property type="entry name" value="LepA_C_sf"/>
</dbReference>
<dbReference type="InterPro" id="IPR013842">
    <property type="entry name" value="LepA_CTD"/>
</dbReference>
<dbReference type="InterPro" id="IPR035654">
    <property type="entry name" value="LepA_IV"/>
</dbReference>
<dbReference type="InterPro" id="IPR027417">
    <property type="entry name" value="P-loop_NTPase"/>
</dbReference>
<dbReference type="InterPro" id="IPR005225">
    <property type="entry name" value="Small_GTP-bd"/>
</dbReference>
<dbReference type="InterPro" id="IPR000795">
    <property type="entry name" value="T_Tr_GTP-bd_dom"/>
</dbReference>
<dbReference type="InterPro" id="IPR009000">
    <property type="entry name" value="Transl_B-barrel_sf"/>
</dbReference>
<dbReference type="NCBIfam" id="TIGR01393">
    <property type="entry name" value="lepA"/>
    <property type="match status" value="1"/>
</dbReference>
<dbReference type="NCBIfam" id="TIGR00231">
    <property type="entry name" value="small_GTP"/>
    <property type="match status" value="1"/>
</dbReference>
<dbReference type="PANTHER" id="PTHR43512:SF4">
    <property type="entry name" value="TRANSLATION FACTOR GUF1 HOMOLOG, CHLOROPLASTIC"/>
    <property type="match status" value="1"/>
</dbReference>
<dbReference type="PANTHER" id="PTHR43512">
    <property type="entry name" value="TRANSLATION FACTOR GUF1-RELATED"/>
    <property type="match status" value="1"/>
</dbReference>
<dbReference type="Pfam" id="PF00679">
    <property type="entry name" value="EFG_C"/>
    <property type="match status" value="1"/>
</dbReference>
<dbReference type="Pfam" id="PF00009">
    <property type="entry name" value="GTP_EFTU"/>
    <property type="match status" value="1"/>
</dbReference>
<dbReference type="Pfam" id="PF03144">
    <property type="entry name" value="GTP_EFTU_D2"/>
    <property type="match status" value="1"/>
</dbReference>
<dbReference type="Pfam" id="PF06421">
    <property type="entry name" value="LepA_C"/>
    <property type="match status" value="1"/>
</dbReference>
<dbReference type="PRINTS" id="PR00315">
    <property type="entry name" value="ELONGATNFCT"/>
</dbReference>
<dbReference type="SMART" id="SM00838">
    <property type="entry name" value="EFG_C"/>
    <property type="match status" value="1"/>
</dbReference>
<dbReference type="SUPFAM" id="SSF54980">
    <property type="entry name" value="EF-G C-terminal domain-like"/>
    <property type="match status" value="2"/>
</dbReference>
<dbReference type="SUPFAM" id="SSF52540">
    <property type="entry name" value="P-loop containing nucleoside triphosphate hydrolases"/>
    <property type="match status" value="1"/>
</dbReference>
<dbReference type="SUPFAM" id="SSF50447">
    <property type="entry name" value="Translation proteins"/>
    <property type="match status" value="1"/>
</dbReference>
<dbReference type="PROSITE" id="PS00301">
    <property type="entry name" value="G_TR_1"/>
    <property type="match status" value="1"/>
</dbReference>
<dbReference type="PROSITE" id="PS51722">
    <property type="entry name" value="G_TR_2"/>
    <property type="match status" value="1"/>
</dbReference>
<comment type="function">
    <text evidence="1">Required for accurate and efficient protein synthesis under certain stress conditions. May act as a fidelity factor of the translation reaction, by catalyzing a one-codon backward translocation of tRNAs on improperly translocated ribosomes. Back-translocation proceeds from a post-translocation (POST) complex to a pre-translocation (PRE) complex, thus giving elongation factor G a second chance to translocate the tRNAs correctly. Binds to ribosomes in a GTP-dependent manner.</text>
</comment>
<comment type="catalytic activity">
    <reaction evidence="1">
        <text>GTP + H2O = GDP + phosphate + H(+)</text>
        <dbReference type="Rhea" id="RHEA:19669"/>
        <dbReference type="ChEBI" id="CHEBI:15377"/>
        <dbReference type="ChEBI" id="CHEBI:15378"/>
        <dbReference type="ChEBI" id="CHEBI:37565"/>
        <dbReference type="ChEBI" id="CHEBI:43474"/>
        <dbReference type="ChEBI" id="CHEBI:58189"/>
        <dbReference type="EC" id="3.6.5.n1"/>
    </reaction>
</comment>
<comment type="subcellular location">
    <subcellularLocation>
        <location evidence="1">Cell membrane</location>
        <topology evidence="1">Peripheral membrane protein</topology>
        <orientation evidence="1">Cytoplasmic side</orientation>
    </subcellularLocation>
</comment>
<comment type="similarity">
    <text evidence="1">Belongs to the TRAFAC class translation factor GTPase superfamily. Classic translation factor GTPase family. LepA subfamily.</text>
</comment>
<sequence length="616" mass="68399">MPASFADTTFTDPSRIRNFCIIAHIDHGKSTLADRMLQLTGVVEERAMRAQYLDRMDIERERGITIKAQNVRLPWRVDDTDYVMHLIDTPGHVDFTYEVSRALEACEGAILLVDAAQGIEAQTLANLYLALDKDLTIIPVLNKIDLPAADPDRYAAELAHIVGCEPSDVLRVSGKTGVGVPELLDEVIRQVPPPVGDADAPARAMIFDSVYDTYRGVVTYVRVVDGKLTPREKIKMMSTGATHELLEIGIVSPEPKPTDGLGVGEVGYLITGVKDVRQSKVGDTVTAARNGAAEPLTGYREPRPMVYSGLYPVDGSDYPDLRDALEKLQLNDAALSYTPETSVALGFGFRCGFLGLLHMEITRERLQREFDLDLISTAPNVVYRVEMEDGTEHVVTNPSYWPEGKVRKVFEPVVKCTIISPSEFIGSIMELCQSRRGELGGMDYLSETRVELRYTLPMAEIIFDFFDSLKSRTRGYASLDYEESGEQESQLVKVDILLQGEAVDAFSAIVHKDAAQAYGHKMTTKLRELIPRQQFEVPIQAAIGSKIIARENIRAIRKDVLAKCYGGDISRKRKLLEKQKEGKKRMKTIGRVDVPQEAFVAALSSDAQADKPKDKK</sequence>
<feature type="chain" id="PRO_0000176311" description="Elongation factor 4">
    <location>
        <begin position="1"/>
        <end position="616"/>
    </location>
</feature>
<feature type="domain" description="tr-type G">
    <location>
        <begin position="14"/>
        <end position="195"/>
    </location>
</feature>
<feature type="binding site" evidence="1">
    <location>
        <begin position="26"/>
        <end position="31"/>
    </location>
    <ligand>
        <name>GTP</name>
        <dbReference type="ChEBI" id="CHEBI:37565"/>
    </ligand>
</feature>
<feature type="binding site" evidence="1">
    <location>
        <begin position="142"/>
        <end position="145"/>
    </location>
    <ligand>
        <name>GTP</name>
        <dbReference type="ChEBI" id="CHEBI:37565"/>
    </ligand>
</feature>
<name>LEPA_NOCFA</name>
<gene>
    <name evidence="1" type="primary">lepA</name>
    <name type="ordered locus">NFA_13990</name>
</gene>
<organism>
    <name type="scientific">Nocardia farcinica (strain IFM 10152)</name>
    <dbReference type="NCBI Taxonomy" id="247156"/>
    <lineage>
        <taxon>Bacteria</taxon>
        <taxon>Bacillati</taxon>
        <taxon>Actinomycetota</taxon>
        <taxon>Actinomycetes</taxon>
        <taxon>Mycobacteriales</taxon>
        <taxon>Nocardiaceae</taxon>
        <taxon>Nocardia</taxon>
    </lineage>
</organism>
<proteinExistence type="inferred from homology"/>
<protein>
    <recommendedName>
        <fullName evidence="1">Elongation factor 4</fullName>
        <shortName evidence="1">EF-4</shortName>
        <ecNumber evidence="1">3.6.5.n1</ecNumber>
    </recommendedName>
    <alternativeName>
        <fullName evidence="1">Ribosomal back-translocase LepA</fullName>
    </alternativeName>
</protein>
<accession>Q5YZZ7</accession>